<feature type="chain" id="PRO_0000347492" description="Alanine--tRNA ligase">
    <location>
        <begin position="1"/>
        <end position="892"/>
    </location>
</feature>
<feature type="binding site" evidence="1">
    <location>
        <position position="577"/>
    </location>
    <ligand>
        <name>Zn(2+)</name>
        <dbReference type="ChEBI" id="CHEBI:29105"/>
    </ligand>
</feature>
<feature type="binding site" evidence="1">
    <location>
        <position position="581"/>
    </location>
    <ligand>
        <name>Zn(2+)</name>
        <dbReference type="ChEBI" id="CHEBI:29105"/>
    </ligand>
</feature>
<feature type="binding site" evidence="1">
    <location>
        <position position="680"/>
    </location>
    <ligand>
        <name>Zn(2+)</name>
        <dbReference type="ChEBI" id="CHEBI:29105"/>
    </ligand>
</feature>
<feature type="binding site" evidence="1">
    <location>
        <position position="684"/>
    </location>
    <ligand>
        <name>Zn(2+)</name>
        <dbReference type="ChEBI" id="CHEBI:29105"/>
    </ligand>
</feature>
<evidence type="ECO:0000255" key="1">
    <source>
        <dbReference type="HAMAP-Rule" id="MF_00036"/>
    </source>
</evidence>
<evidence type="ECO:0000305" key="2"/>
<name>SYA_PAEAT</name>
<proteinExistence type="inferred from homology"/>
<protein>
    <recommendedName>
        <fullName evidence="1">Alanine--tRNA ligase</fullName>
        <ecNumber evidence="1">6.1.1.7</ecNumber>
    </recommendedName>
    <alternativeName>
        <fullName evidence="1">Alanyl-tRNA synthetase</fullName>
        <shortName evidence="1">AlaRS</shortName>
    </alternativeName>
</protein>
<gene>
    <name evidence="1" type="primary">alaS</name>
    <name type="ordered locus">AAur_2281</name>
</gene>
<accession>A1R709</accession>
<keyword id="KW-0030">Aminoacyl-tRNA synthetase</keyword>
<keyword id="KW-0067">ATP-binding</keyword>
<keyword id="KW-0963">Cytoplasm</keyword>
<keyword id="KW-0436">Ligase</keyword>
<keyword id="KW-0479">Metal-binding</keyword>
<keyword id="KW-0547">Nucleotide-binding</keyword>
<keyword id="KW-0648">Protein biosynthesis</keyword>
<keyword id="KW-0694">RNA-binding</keyword>
<keyword id="KW-0820">tRNA-binding</keyword>
<keyword id="KW-0862">Zinc</keyword>
<comment type="function">
    <text evidence="1">Catalyzes the attachment of alanine to tRNA(Ala) in a two-step reaction: alanine is first activated by ATP to form Ala-AMP and then transferred to the acceptor end of tRNA(Ala). Also edits incorrectly charged Ser-tRNA(Ala) and Gly-tRNA(Ala) via its editing domain.</text>
</comment>
<comment type="catalytic activity">
    <reaction evidence="1">
        <text>tRNA(Ala) + L-alanine + ATP = L-alanyl-tRNA(Ala) + AMP + diphosphate</text>
        <dbReference type="Rhea" id="RHEA:12540"/>
        <dbReference type="Rhea" id="RHEA-COMP:9657"/>
        <dbReference type="Rhea" id="RHEA-COMP:9923"/>
        <dbReference type="ChEBI" id="CHEBI:30616"/>
        <dbReference type="ChEBI" id="CHEBI:33019"/>
        <dbReference type="ChEBI" id="CHEBI:57972"/>
        <dbReference type="ChEBI" id="CHEBI:78442"/>
        <dbReference type="ChEBI" id="CHEBI:78497"/>
        <dbReference type="ChEBI" id="CHEBI:456215"/>
        <dbReference type="EC" id="6.1.1.7"/>
    </reaction>
</comment>
<comment type="cofactor">
    <cofactor evidence="1">
        <name>Zn(2+)</name>
        <dbReference type="ChEBI" id="CHEBI:29105"/>
    </cofactor>
    <text evidence="1">Binds 1 zinc ion per subunit.</text>
</comment>
<comment type="subcellular location">
    <subcellularLocation>
        <location evidence="1">Cytoplasm</location>
    </subcellularLocation>
</comment>
<comment type="domain">
    <text evidence="1">Consists of three domains; the N-terminal catalytic domain, the editing domain and the C-terminal C-Ala domain. The editing domain removes incorrectly charged amino acids, while the C-Ala domain, along with tRNA(Ala), serves as a bridge to cooperatively bring together the editing and aminoacylation centers thus stimulating deacylation of misacylated tRNAs.</text>
</comment>
<comment type="similarity">
    <text evidence="1">Belongs to the class-II aminoacyl-tRNA synthetase family.</text>
</comment>
<comment type="sequence caution" evidence="2">
    <conflict type="erroneous initiation">
        <sequence resource="EMBL-CDS" id="ABM07701"/>
    </conflict>
</comment>
<sequence length="892" mass="95822">MKSQEITKRWVDFFVNKGHTAVPSASLVSSDPSLLFTVAGMVPFIPYLTAREEPPYSRATSVQKCIRTGDIEEVGKTARHGTFFQMCGNFSFGDYFKEDAIKFAFELLTTSVDDGGYGLPAERLWVTVYEEDDEAKELWLKNTGIPAERIQRMGKADNYWSTGQPGPAGPCSEIYYDRGPAYGIEGGPLADETRYIEIWNLVFMQYQIENVRSKVDFDIVGELPQKNIDTGLGMERLAMILQGVENMYETDQVRPVIDKAAELSGREYTSAESPEDPHHTDDVRMRVVGDHIRSALMLIADGVAPSNEGRGYVLRRLIRRAVRAMRLLGVEKACLPDLLPASRDAMKGVYPVVETDFARISRIAYAEEKAFLRTIASGTARLEDAVAESKAAGVPLSGADAFALHDTYGFPIDLTLEMAEEAGLQVDEAGFRALMLEQRQRAQADAKGKKGGHADLSAYQELLGKGETVFTGYDELEGEAKVRGIVSGGRAVAHASTGDEIELVLNETPFYAEAGGQSADTGLITGDGFVVEVLDVQRPIKGLSVHKAIVREGEIGSDALVRAAVDRERRHAAEQAHTGTHIVHAALHQILGPEATQRGSYNKAGYLRFDFAWGEGLSTATRSEIEEVSNIAIRNNFRVDTKVMGLAEAKALGAMALFGENYGSEVRVVEIDGAWSRELCGGTHVSNTSLIGSLSLLGEQSVGSGNRRVEAFVGLDAFRHLAAERALVSELTELLKVPSGQLADRISSTLNKLKATEKELDRLRKEQLAAAAANLVGTAKDAAGVRVVAHDAGQVGGADDLRNLALDLRNRLGSEASTVAVAGVSNDRPVILIATNEAAREAGVKAGALVRLAAGILGGGGGGKDDVAQGGGTDAGKVSEALTAVVDAIAKR</sequence>
<reference key="1">
    <citation type="journal article" date="2006" name="PLoS Genet.">
        <title>Secrets of soil survival revealed by the genome sequence of Arthrobacter aurescens TC1.</title>
        <authorList>
            <person name="Mongodin E.F."/>
            <person name="Shapir N."/>
            <person name="Daugherty S.C."/>
            <person name="DeBoy R.T."/>
            <person name="Emerson J.B."/>
            <person name="Shvartzbeyn A."/>
            <person name="Radune D."/>
            <person name="Vamathevan J."/>
            <person name="Riggs F."/>
            <person name="Grinberg V."/>
            <person name="Khouri H.M."/>
            <person name="Wackett L.P."/>
            <person name="Nelson K.E."/>
            <person name="Sadowsky M.J."/>
        </authorList>
    </citation>
    <scope>NUCLEOTIDE SEQUENCE [LARGE SCALE GENOMIC DNA]</scope>
    <source>
        <strain>TC1</strain>
    </source>
</reference>
<organism>
    <name type="scientific">Paenarthrobacter aurescens (strain TC1)</name>
    <dbReference type="NCBI Taxonomy" id="290340"/>
    <lineage>
        <taxon>Bacteria</taxon>
        <taxon>Bacillati</taxon>
        <taxon>Actinomycetota</taxon>
        <taxon>Actinomycetes</taxon>
        <taxon>Micrococcales</taxon>
        <taxon>Micrococcaceae</taxon>
        <taxon>Paenarthrobacter</taxon>
    </lineage>
</organism>
<dbReference type="EC" id="6.1.1.7" evidence="1"/>
<dbReference type="EMBL" id="CP000474">
    <property type="protein sequence ID" value="ABM07701.1"/>
    <property type="status" value="ALT_INIT"/>
    <property type="molecule type" value="Genomic_DNA"/>
</dbReference>
<dbReference type="RefSeq" id="WP_043470321.1">
    <property type="nucleotide sequence ID" value="NC_008711.1"/>
</dbReference>
<dbReference type="SMR" id="A1R709"/>
<dbReference type="STRING" id="290340.AAur_2281"/>
<dbReference type="KEGG" id="aau:AAur_2281"/>
<dbReference type="eggNOG" id="COG0013">
    <property type="taxonomic scope" value="Bacteria"/>
</dbReference>
<dbReference type="HOGENOM" id="CLU_004485_1_1_11"/>
<dbReference type="OrthoDB" id="9803884at2"/>
<dbReference type="Proteomes" id="UP000000637">
    <property type="component" value="Chromosome"/>
</dbReference>
<dbReference type="GO" id="GO:0005829">
    <property type="term" value="C:cytosol"/>
    <property type="evidence" value="ECO:0007669"/>
    <property type="project" value="TreeGrafter"/>
</dbReference>
<dbReference type="GO" id="GO:0004813">
    <property type="term" value="F:alanine-tRNA ligase activity"/>
    <property type="evidence" value="ECO:0007669"/>
    <property type="project" value="UniProtKB-UniRule"/>
</dbReference>
<dbReference type="GO" id="GO:0002161">
    <property type="term" value="F:aminoacyl-tRNA deacylase activity"/>
    <property type="evidence" value="ECO:0007669"/>
    <property type="project" value="TreeGrafter"/>
</dbReference>
<dbReference type="GO" id="GO:0005524">
    <property type="term" value="F:ATP binding"/>
    <property type="evidence" value="ECO:0007669"/>
    <property type="project" value="UniProtKB-UniRule"/>
</dbReference>
<dbReference type="GO" id="GO:0000049">
    <property type="term" value="F:tRNA binding"/>
    <property type="evidence" value="ECO:0007669"/>
    <property type="project" value="UniProtKB-KW"/>
</dbReference>
<dbReference type="GO" id="GO:0008270">
    <property type="term" value="F:zinc ion binding"/>
    <property type="evidence" value="ECO:0007669"/>
    <property type="project" value="UniProtKB-UniRule"/>
</dbReference>
<dbReference type="GO" id="GO:0006419">
    <property type="term" value="P:alanyl-tRNA aminoacylation"/>
    <property type="evidence" value="ECO:0007669"/>
    <property type="project" value="UniProtKB-UniRule"/>
</dbReference>
<dbReference type="CDD" id="cd00673">
    <property type="entry name" value="AlaRS_core"/>
    <property type="match status" value="1"/>
</dbReference>
<dbReference type="FunFam" id="3.10.310.40:FF:000001">
    <property type="entry name" value="Alanine--tRNA ligase"/>
    <property type="match status" value="1"/>
</dbReference>
<dbReference type="FunFam" id="3.30.54.20:FF:000001">
    <property type="entry name" value="Alanine--tRNA ligase"/>
    <property type="match status" value="1"/>
</dbReference>
<dbReference type="FunFam" id="3.30.930.10:FF:000004">
    <property type="entry name" value="Alanine--tRNA ligase"/>
    <property type="match status" value="1"/>
</dbReference>
<dbReference type="FunFam" id="3.30.980.10:FF:000004">
    <property type="entry name" value="Alanine--tRNA ligase, cytoplasmic"/>
    <property type="match status" value="1"/>
</dbReference>
<dbReference type="Gene3D" id="2.40.30.130">
    <property type="match status" value="1"/>
</dbReference>
<dbReference type="Gene3D" id="3.10.310.40">
    <property type="match status" value="1"/>
</dbReference>
<dbReference type="Gene3D" id="3.30.54.20">
    <property type="match status" value="1"/>
</dbReference>
<dbReference type="Gene3D" id="6.10.250.550">
    <property type="match status" value="1"/>
</dbReference>
<dbReference type="Gene3D" id="3.30.930.10">
    <property type="entry name" value="Bira Bifunctional Protein, Domain 2"/>
    <property type="match status" value="1"/>
</dbReference>
<dbReference type="Gene3D" id="3.30.980.10">
    <property type="entry name" value="Threonyl-trna Synthetase, Chain A, domain 2"/>
    <property type="match status" value="1"/>
</dbReference>
<dbReference type="HAMAP" id="MF_00036_B">
    <property type="entry name" value="Ala_tRNA_synth_B"/>
    <property type="match status" value="1"/>
</dbReference>
<dbReference type="InterPro" id="IPR045864">
    <property type="entry name" value="aa-tRNA-synth_II/BPL/LPL"/>
</dbReference>
<dbReference type="InterPro" id="IPR002318">
    <property type="entry name" value="Ala-tRNA-lgiase_IIc"/>
</dbReference>
<dbReference type="InterPro" id="IPR018162">
    <property type="entry name" value="Ala-tRNA-ligase_IIc_anticod-bd"/>
</dbReference>
<dbReference type="InterPro" id="IPR018165">
    <property type="entry name" value="Ala-tRNA-synth_IIc_core"/>
</dbReference>
<dbReference type="InterPro" id="IPR018164">
    <property type="entry name" value="Ala-tRNA-synth_IIc_N"/>
</dbReference>
<dbReference type="InterPro" id="IPR050058">
    <property type="entry name" value="Ala-tRNA_ligase"/>
</dbReference>
<dbReference type="InterPro" id="IPR023033">
    <property type="entry name" value="Ala_tRNA_ligase_euk/bac"/>
</dbReference>
<dbReference type="InterPro" id="IPR003156">
    <property type="entry name" value="DHHA1_dom"/>
</dbReference>
<dbReference type="InterPro" id="IPR018163">
    <property type="entry name" value="Thr/Ala-tRNA-synth_IIc_edit"/>
</dbReference>
<dbReference type="InterPro" id="IPR009000">
    <property type="entry name" value="Transl_B-barrel_sf"/>
</dbReference>
<dbReference type="InterPro" id="IPR012947">
    <property type="entry name" value="tRNA_SAD"/>
</dbReference>
<dbReference type="NCBIfam" id="TIGR00344">
    <property type="entry name" value="alaS"/>
    <property type="match status" value="1"/>
</dbReference>
<dbReference type="PANTHER" id="PTHR11777:SF9">
    <property type="entry name" value="ALANINE--TRNA LIGASE, CYTOPLASMIC"/>
    <property type="match status" value="1"/>
</dbReference>
<dbReference type="PANTHER" id="PTHR11777">
    <property type="entry name" value="ALANYL-TRNA SYNTHETASE"/>
    <property type="match status" value="1"/>
</dbReference>
<dbReference type="Pfam" id="PF02272">
    <property type="entry name" value="DHHA1"/>
    <property type="match status" value="1"/>
</dbReference>
<dbReference type="Pfam" id="PF01411">
    <property type="entry name" value="tRNA-synt_2c"/>
    <property type="match status" value="1"/>
</dbReference>
<dbReference type="Pfam" id="PF07973">
    <property type="entry name" value="tRNA_SAD"/>
    <property type="match status" value="1"/>
</dbReference>
<dbReference type="PRINTS" id="PR00980">
    <property type="entry name" value="TRNASYNTHALA"/>
</dbReference>
<dbReference type="SMART" id="SM00863">
    <property type="entry name" value="tRNA_SAD"/>
    <property type="match status" value="1"/>
</dbReference>
<dbReference type="SUPFAM" id="SSF55681">
    <property type="entry name" value="Class II aaRS and biotin synthetases"/>
    <property type="match status" value="1"/>
</dbReference>
<dbReference type="SUPFAM" id="SSF101353">
    <property type="entry name" value="Putative anticodon-binding domain of alanyl-tRNA synthetase (AlaRS)"/>
    <property type="match status" value="1"/>
</dbReference>
<dbReference type="SUPFAM" id="SSF55186">
    <property type="entry name" value="ThrRS/AlaRS common domain"/>
    <property type="match status" value="1"/>
</dbReference>
<dbReference type="SUPFAM" id="SSF50447">
    <property type="entry name" value="Translation proteins"/>
    <property type="match status" value="1"/>
</dbReference>
<dbReference type="PROSITE" id="PS50860">
    <property type="entry name" value="AA_TRNA_LIGASE_II_ALA"/>
    <property type="match status" value="1"/>
</dbReference>